<proteinExistence type="evidence at protein level"/>
<sequence length="114" mass="11601">QVGYSGIVSPDGNNIQFTHDFAHSIVLKGPSGIVTSDGKNLQLTAGQASLQAAAPAPPLPVSHYVASQQSVVGPSGIVSPSGNVQFSHEFADNVVLVGPSGIVTKDGNNLQLRA</sequence>
<name>CUPC1_CANPG</name>
<organism>
    <name type="scientific">Cancer pagurus</name>
    <name type="common">Rock crab</name>
    <dbReference type="NCBI Taxonomy" id="6755"/>
    <lineage>
        <taxon>Eukaryota</taxon>
        <taxon>Metazoa</taxon>
        <taxon>Ecdysozoa</taxon>
        <taxon>Arthropoda</taxon>
        <taxon>Crustacea</taxon>
        <taxon>Multicrustacea</taxon>
        <taxon>Malacostraca</taxon>
        <taxon>Eumalacostraca</taxon>
        <taxon>Eucarida</taxon>
        <taxon>Decapoda</taxon>
        <taxon>Pleocyemata</taxon>
        <taxon>Brachyura</taxon>
        <taxon>Eubrachyura</taxon>
        <taxon>Cancroidea</taxon>
        <taxon>Cancridae</taxon>
        <taxon>Cancer</taxon>
    </lineage>
</organism>
<protein>
    <recommendedName>
        <fullName>Cuticle protein CP1158</fullName>
        <shortName>CPCP1158</shortName>
    </recommendedName>
</protein>
<feature type="chain" id="PRO_0000196161" description="Cuticle protein CP1158">
    <location>
        <begin position="1"/>
        <end position="114"/>
    </location>
</feature>
<feature type="repeat" description="1">
    <location>
        <begin position="1"/>
        <end position="17"/>
    </location>
</feature>
<feature type="repeat" description="2">
    <location>
        <begin position="26"/>
        <end position="43"/>
    </location>
</feature>
<feature type="repeat" description="3">
    <location>
        <begin position="70"/>
        <end position="87"/>
    </location>
</feature>
<feature type="repeat" description="4">
    <location>
        <begin position="95"/>
        <end position="112"/>
    </location>
</feature>
<feature type="modified residue" description="Pyrrolidone carboxylic acid" evidence="1">
    <location>
        <position position="1"/>
    </location>
</feature>
<keyword id="KW-0193">Cuticle</keyword>
<keyword id="KW-0903">Direct protein sequencing</keyword>
<keyword id="KW-0873">Pyrrolidone carboxylic acid</keyword>
<keyword id="KW-0677">Repeat</keyword>
<dbReference type="GO" id="GO:0042302">
    <property type="term" value="F:structural constituent of cuticle"/>
    <property type="evidence" value="ECO:0007669"/>
    <property type="project" value="UniProtKB-KW"/>
</dbReference>
<dbReference type="InterPro" id="IPR012539">
    <property type="entry name" value="Cuticle_1"/>
</dbReference>
<dbReference type="Pfam" id="PF08140">
    <property type="entry name" value="Cuticle_1"/>
    <property type="match status" value="2"/>
</dbReference>
<evidence type="ECO:0000269" key="1">
    <source>
    </source>
</evidence>
<comment type="tissue specificity">
    <text>Calcified shell.</text>
</comment>
<comment type="mass spectrometry" mass="11575.7" method="MALDI" evidence="1"/>
<reference key="1">
    <citation type="journal article" date="1999" name="Comp. Biochem. Physiol.">
        <title>Exoskeletal proteins from the crab, Cancer pagurus.</title>
        <authorList>
            <person name="Andersen S.O."/>
        </authorList>
    </citation>
    <scope>PROTEIN SEQUENCE</scope>
    <scope>PYROGLUTAMATE FORMATION AT GLN-1</scope>
    <scope>MASS SPECTROMETRY</scope>
    <source>
        <tissue>Carapace cuticle</tissue>
    </source>
</reference>
<accession>P81580</accession>